<dbReference type="EMBL" id="D10695">
    <property type="protein sequence ID" value="BAA01537.1"/>
    <property type="molecule type" value="Genomic_DNA"/>
</dbReference>
<dbReference type="EMBL" id="CU329672">
    <property type="protein sequence ID" value="CAA20363.1"/>
    <property type="molecule type" value="Genomic_DNA"/>
</dbReference>
<dbReference type="PIR" id="T41534">
    <property type="entry name" value="T41534"/>
</dbReference>
<dbReference type="RefSeq" id="NP_588265.1">
    <property type="nucleotide sequence ID" value="NM_001023255.2"/>
</dbReference>
<dbReference type="SMR" id="P36619"/>
<dbReference type="BioGRID" id="275293">
    <property type="interactions" value="8"/>
</dbReference>
<dbReference type="FunCoup" id="P36619">
    <property type="interactions" value="18"/>
</dbReference>
<dbReference type="STRING" id="284812.P36619"/>
<dbReference type="TCDB" id="3.A.1.201.18">
    <property type="family name" value="the atp-binding cassette (abc) superfamily"/>
</dbReference>
<dbReference type="iPTMnet" id="P36619"/>
<dbReference type="PaxDb" id="4896-SPCC663.03.1"/>
<dbReference type="EnsemblFungi" id="SPCC663.03.1">
    <property type="protein sequence ID" value="SPCC663.03.1:pep"/>
    <property type="gene ID" value="SPCC663.03"/>
</dbReference>
<dbReference type="PomBase" id="SPCC663.03">
    <property type="gene designation" value="pmd1"/>
</dbReference>
<dbReference type="VEuPathDB" id="FungiDB:SPCC663.03"/>
<dbReference type="eggNOG" id="KOG0055">
    <property type="taxonomic scope" value="Eukaryota"/>
</dbReference>
<dbReference type="HOGENOM" id="CLU_000604_17_2_1"/>
<dbReference type="InParanoid" id="P36619"/>
<dbReference type="OMA" id="GFGQEEQ"/>
<dbReference type="PhylomeDB" id="P36619"/>
<dbReference type="Reactome" id="R-SPO-1369007">
    <property type="pathway name" value="Mitochondrial ABC transporters"/>
</dbReference>
<dbReference type="Reactome" id="R-SPO-159418">
    <property type="pathway name" value="Recycling of bile acids and salts"/>
</dbReference>
<dbReference type="Reactome" id="R-SPO-193368">
    <property type="pathway name" value="Synthesis of bile acids and bile salts via 7alpha-hydroxycholesterol"/>
</dbReference>
<dbReference type="Reactome" id="R-SPO-382556">
    <property type="pathway name" value="ABC-family proteins mediated transport"/>
</dbReference>
<dbReference type="Reactome" id="R-SPO-9754706">
    <property type="pathway name" value="Atorvastatin ADME"/>
</dbReference>
<dbReference type="Reactome" id="R-SPO-9757110">
    <property type="pathway name" value="Prednisone ADME"/>
</dbReference>
<dbReference type="PRO" id="PR:P36619"/>
<dbReference type="Proteomes" id="UP000002485">
    <property type="component" value="Chromosome III"/>
</dbReference>
<dbReference type="GO" id="GO:0000324">
    <property type="term" value="C:fungal-type vacuole"/>
    <property type="evidence" value="ECO:0000314"/>
    <property type="project" value="PomBase"/>
</dbReference>
<dbReference type="GO" id="GO:0016020">
    <property type="term" value="C:membrane"/>
    <property type="evidence" value="ECO:0000318"/>
    <property type="project" value="GO_Central"/>
</dbReference>
<dbReference type="GO" id="GO:0005886">
    <property type="term" value="C:plasma membrane"/>
    <property type="evidence" value="ECO:0000314"/>
    <property type="project" value="PomBase"/>
</dbReference>
<dbReference type="GO" id="GO:0008559">
    <property type="term" value="F:ABC-type xenobiotic transporter activity"/>
    <property type="evidence" value="ECO:0000315"/>
    <property type="project" value="PomBase"/>
</dbReference>
<dbReference type="GO" id="GO:0005524">
    <property type="term" value="F:ATP binding"/>
    <property type="evidence" value="ECO:0007669"/>
    <property type="project" value="UniProtKB-KW"/>
</dbReference>
<dbReference type="GO" id="GO:0016887">
    <property type="term" value="F:ATP hydrolysis activity"/>
    <property type="evidence" value="ECO:0007669"/>
    <property type="project" value="InterPro"/>
</dbReference>
<dbReference type="GO" id="GO:0042626">
    <property type="term" value="F:ATPase-coupled transmembrane transporter activity"/>
    <property type="evidence" value="ECO:0000318"/>
    <property type="project" value="GO_Central"/>
</dbReference>
<dbReference type="GO" id="GO:0046677">
    <property type="term" value="P:response to antibiotic"/>
    <property type="evidence" value="ECO:0007669"/>
    <property type="project" value="UniProtKB-KW"/>
</dbReference>
<dbReference type="GO" id="GO:0055085">
    <property type="term" value="P:transmembrane transport"/>
    <property type="evidence" value="ECO:0000318"/>
    <property type="project" value="GO_Central"/>
</dbReference>
<dbReference type="GO" id="GO:1990961">
    <property type="term" value="P:xenobiotic detoxification by transmembrane export across the plasma membrane"/>
    <property type="evidence" value="ECO:0000315"/>
    <property type="project" value="PomBase"/>
</dbReference>
<dbReference type="CDD" id="cd18577">
    <property type="entry name" value="ABC_6TM_Pgp_ABCB1_D1_like"/>
    <property type="match status" value="1"/>
</dbReference>
<dbReference type="CDD" id="cd18578">
    <property type="entry name" value="ABC_6TM_Pgp_ABCB1_D2_like"/>
    <property type="match status" value="1"/>
</dbReference>
<dbReference type="CDD" id="cd03249">
    <property type="entry name" value="ABC_MTABC3_MDL1_MDL2"/>
    <property type="match status" value="2"/>
</dbReference>
<dbReference type="FunFam" id="1.20.1560.10:FF:000102">
    <property type="entry name" value="ABC multidrug transporter Mdr1"/>
    <property type="match status" value="1"/>
</dbReference>
<dbReference type="FunFam" id="3.40.50.300:FF:000913">
    <property type="entry name" value="ABC multidrug transporter SitT"/>
    <property type="match status" value="1"/>
</dbReference>
<dbReference type="FunFam" id="3.40.50.300:FF:000251">
    <property type="entry name" value="ABC transporter B family member 19"/>
    <property type="match status" value="1"/>
</dbReference>
<dbReference type="Gene3D" id="1.20.1560.10">
    <property type="entry name" value="ABC transporter type 1, transmembrane domain"/>
    <property type="match status" value="3"/>
</dbReference>
<dbReference type="Gene3D" id="3.40.50.300">
    <property type="entry name" value="P-loop containing nucleotide triphosphate hydrolases"/>
    <property type="match status" value="2"/>
</dbReference>
<dbReference type="InterPro" id="IPR003593">
    <property type="entry name" value="AAA+_ATPase"/>
</dbReference>
<dbReference type="InterPro" id="IPR011527">
    <property type="entry name" value="ABC1_TM_dom"/>
</dbReference>
<dbReference type="InterPro" id="IPR036640">
    <property type="entry name" value="ABC1_TM_sf"/>
</dbReference>
<dbReference type="InterPro" id="IPR003439">
    <property type="entry name" value="ABC_transporter-like_ATP-bd"/>
</dbReference>
<dbReference type="InterPro" id="IPR017871">
    <property type="entry name" value="ABC_transporter-like_CS"/>
</dbReference>
<dbReference type="InterPro" id="IPR027417">
    <property type="entry name" value="P-loop_NTPase"/>
</dbReference>
<dbReference type="InterPro" id="IPR039421">
    <property type="entry name" value="Type_1_exporter"/>
</dbReference>
<dbReference type="PANTHER" id="PTHR43394">
    <property type="entry name" value="ATP-DEPENDENT PERMEASE MDL1, MITOCHONDRIAL"/>
    <property type="match status" value="1"/>
</dbReference>
<dbReference type="PANTHER" id="PTHR43394:SF27">
    <property type="entry name" value="ATP-DEPENDENT TRANSLOCASE ABCB1-LIKE"/>
    <property type="match status" value="1"/>
</dbReference>
<dbReference type="Pfam" id="PF00664">
    <property type="entry name" value="ABC_membrane"/>
    <property type="match status" value="2"/>
</dbReference>
<dbReference type="Pfam" id="PF00005">
    <property type="entry name" value="ABC_tran"/>
    <property type="match status" value="2"/>
</dbReference>
<dbReference type="SMART" id="SM00382">
    <property type="entry name" value="AAA"/>
    <property type="match status" value="2"/>
</dbReference>
<dbReference type="SUPFAM" id="SSF90123">
    <property type="entry name" value="ABC transporter transmembrane region"/>
    <property type="match status" value="2"/>
</dbReference>
<dbReference type="SUPFAM" id="SSF52540">
    <property type="entry name" value="P-loop containing nucleoside triphosphate hydrolases"/>
    <property type="match status" value="2"/>
</dbReference>
<dbReference type="PROSITE" id="PS50929">
    <property type="entry name" value="ABC_TM1F"/>
    <property type="match status" value="2"/>
</dbReference>
<dbReference type="PROSITE" id="PS00211">
    <property type="entry name" value="ABC_TRANSPORTER_1"/>
    <property type="match status" value="2"/>
</dbReference>
<dbReference type="PROSITE" id="PS50893">
    <property type="entry name" value="ABC_TRANSPORTER_2"/>
    <property type="match status" value="2"/>
</dbReference>
<sequence length="1362" mass="149632">MSLHSKKSTSTVKDNEHSLDLSIKSIPSNEKNFSTEKSENEASESHVVDVVKDPFEQYTPEEQEILYKQINDTPAKLSGYPRILSYADKWDIMLQLAGTITGIGAGLGMPLMSLVSGQLAQAFTDLASGKGASSFQHTVDHFCLYFIYIAIGVFGCSYIYTVTFIIAGERIARRIRQDYLHAILSQNIGYFDRLGAGEITTRITTDTNFIQDGLGEKVGLVFFAIATFVSGFVIAFIRHWKFTLILSSMFPAICGGIGLGVPFITKNTKGQIAVVAESSTFVEEVFSNIRNAFAFGTQDILAKLYNKYLITAQRFGINKAIAMGLMVGWMFFVAYGVYGLAFWEGGRLLHAGDLDVSKLIGCFFAVLIASYSLANISPKMQSFVSCASAAKKIFDTIDRVSPINAFTPTGDVVKDIKGEIELKNIRFVYPTRPEVLVLDNFSLVCPSGKITALVGASGSGKSTIIGLVERFYDPIGGQVFLDGKDLRTLNVASLRNQISLVQQEPVLFATTVFENITYGLPDTIKGTLSKEELERRVYDAAKLANAYDFIMTLPEQFSTNVGQRGFLMSGGQKQRIAIARAVISDPKILLLDEATSALDSKSEVLVQKALDNASRSRTTIVIAHRLSTIRNADNIVVVNAGKIVEQGSHNELLDLNGAYARLVEAQKLSGGEKDQEMVEEELEDAPREIPITSFGDDDEDNDMASLEAPMMSHNTDTDTLNNKLNEKDNVVFEDKTLQHVASEIVPNLPPADVGELNEEPKKSKKSKKNNHEINSLTALWFIHSFVRTMIEIICLLIGILASMICGAAYPVQAAVFARFLNIFTDLSSTDFLHKVNVFAVYWLILAIVQFFAYAISNFAMTYAMEAVLQRIRYHLFRTLLRQDVEFFDRSENTVGAITTSLSTKIQSLEGLSGPTLGTFFQILTNIISVTILSLATGWKLGLVTLSTSPVIITAGYYRVRALDQVQEKLSAAYKESAAFACESTSAIRTVASLNREENVFAEYCDSLIKPGRESAIASLKSGLFFSAAQGVTFLINALTFWYGSTLMRKGEYNIVQFYTCFIAIVFGIQQAGQFFGYSADVTKAKAAAGEIKYLSESKPKIDTWSTEGKKVESLQSAAIEFRQVEFSYPTRRHIKVLRGLNLTVKPGQFVAFVGSSGCGKSTTIGLIERFYDCDNGAVLVDGVNVRDYNINDYRKQIALVSQEPTLYQGTVRENIVLGASKDVSEEEMIEACKKANIHEFILGLPNGYNTLCGQKGSSLSGGQKQRIAIARALIRNPKILLLDEATSALDSHSEKVVQEALNAASQGRTTVAIAHRLSSIQDADCIFVFDGGVIAEAGTHAELVKQRGRYYELVVEQGLNKA</sequence>
<name>PMD1_SCHPO</name>
<gene>
    <name type="primary">pmd1</name>
    <name type="ORF">SPCC663.03</name>
</gene>
<evidence type="ECO:0000255" key="1"/>
<evidence type="ECO:0000255" key="2">
    <source>
        <dbReference type="PROSITE-ProRule" id="PRU00434"/>
    </source>
</evidence>
<evidence type="ECO:0000255" key="3">
    <source>
        <dbReference type="PROSITE-ProRule" id="PRU00441"/>
    </source>
</evidence>
<evidence type="ECO:0000256" key="4">
    <source>
        <dbReference type="SAM" id="MobiDB-lite"/>
    </source>
</evidence>
<evidence type="ECO:0000305" key="5"/>
<accession>P36619</accession>
<accession>O74513</accession>
<comment type="function">
    <text>May be a transmembrane transporter of the mating factor, namely P-factor or M-factor. Confers resistance to leptomycin B and to several other antifungal drugs.</text>
</comment>
<comment type="subcellular location">
    <subcellularLocation>
        <location evidence="5">Membrane</location>
        <topology evidence="5">Multi-pass membrane protein</topology>
    </subcellularLocation>
</comment>
<comment type="similarity">
    <text evidence="5">Belongs to the ABC transporter superfamily. ABCB family. Multidrug resistance exporter (TC 3.A.1.201) subfamily.</text>
</comment>
<keyword id="KW-0046">Antibiotic resistance</keyword>
<keyword id="KW-0067">ATP-binding</keyword>
<keyword id="KW-0472">Membrane</keyword>
<keyword id="KW-0547">Nucleotide-binding</keyword>
<keyword id="KW-1185">Reference proteome</keyword>
<keyword id="KW-0677">Repeat</keyword>
<keyword id="KW-0812">Transmembrane</keyword>
<keyword id="KW-1133">Transmembrane helix</keyword>
<feature type="chain" id="PRO_0000093452" description="Leptomycin B resistance protein pmd1">
    <location>
        <begin position="1"/>
        <end position="1362"/>
    </location>
</feature>
<feature type="topological domain" description="Cytoplasmic" evidence="1">
    <location>
        <begin position="1"/>
        <end position="91"/>
    </location>
</feature>
<feature type="transmembrane region" description="Helical" evidence="3">
    <location>
        <begin position="92"/>
        <end position="115"/>
    </location>
</feature>
<feature type="transmembrane region" description="Helical" evidence="3">
    <location>
        <begin position="138"/>
        <end position="162"/>
    </location>
</feature>
<feature type="transmembrane region" description="Helical" evidence="3">
    <location>
        <begin position="220"/>
        <end position="237"/>
    </location>
</feature>
<feature type="transmembrane region" description="Helical" evidence="3">
    <location>
        <begin position="244"/>
        <end position="264"/>
    </location>
</feature>
<feature type="transmembrane region" description="Helical" evidence="3">
    <location>
        <begin position="320"/>
        <end position="346"/>
    </location>
</feature>
<feature type="transmembrane region" description="Helical" evidence="3">
    <location>
        <begin position="354"/>
        <end position="374"/>
    </location>
</feature>
<feature type="topological domain" description="Cytoplasmic" evidence="1">
    <location>
        <begin position="375"/>
        <end position="788"/>
    </location>
</feature>
<feature type="transmembrane region" description="Helical" evidence="3">
    <location>
        <begin position="789"/>
        <end position="809"/>
    </location>
</feature>
<feature type="transmembrane region" description="Helical" evidence="3">
    <location>
        <begin position="835"/>
        <end position="859"/>
    </location>
</feature>
<feature type="transmembrane region" description="Helical" evidence="3">
    <location>
        <begin position="916"/>
        <end position="935"/>
    </location>
</feature>
<feature type="transmembrane region" description="Helical" evidence="3">
    <location>
        <begin position="940"/>
        <end position="957"/>
    </location>
</feature>
<feature type="transmembrane region" description="Helical" evidence="3">
    <location>
        <begin position="1022"/>
        <end position="1040"/>
    </location>
</feature>
<feature type="transmembrane region" description="Helical" evidence="3">
    <location>
        <begin position="1054"/>
        <end position="1072"/>
    </location>
</feature>
<feature type="topological domain" description="Cytoplasmic" evidence="1">
    <location>
        <begin position="1073"/>
        <end position="1362"/>
    </location>
</feature>
<feature type="domain" description="ABC transmembrane type-1 1" evidence="3">
    <location>
        <begin position="95"/>
        <end position="385"/>
    </location>
</feature>
<feature type="domain" description="ABC transporter 1" evidence="2">
    <location>
        <begin position="420"/>
        <end position="665"/>
    </location>
</feature>
<feature type="domain" description="ABC transmembrane type-1 2" evidence="3">
    <location>
        <begin position="795"/>
        <end position="1083"/>
    </location>
</feature>
<feature type="domain" description="ABC transporter 2" evidence="2">
    <location>
        <begin position="1119"/>
        <end position="1356"/>
    </location>
</feature>
<feature type="region of interest" description="Disordered" evidence="4">
    <location>
        <begin position="1"/>
        <end position="45"/>
    </location>
</feature>
<feature type="region of interest" description="Disordered" evidence="4">
    <location>
        <begin position="748"/>
        <end position="768"/>
    </location>
</feature>
<feature type="compositionally biased region" description="Basic and acidic residues" evidence="4">
    <location>
        <begin position="33"/>
        <end position="45"/>
    </location>
</feature>
<feature type="binding site" evidence="2">
    <location>
        <begin position="455"/>
        <end position="462"/>
    </location>
    <ligand>
        <name>ATP</name>
        <dbReference type="ChEBI" id="CHEBI:30616"/>
        <label>1</label>
    </ligand>
</feature>
<feature type="binding site" evidence="2">
    <location>
        <begin position="1154"/>
        <end position="1161"/>
    </location>
    <ligand>
        <name>ATP</name>
        <dbReference type="ChEBI" id="CHEBI:30616"/>
        <label>2</label>
    </ligand>
</feature>
<feature type="sequence conflict" description="In Ref. 1; BAA01537." evidence="5" ref="1">
    <original>IA</original>
    <variation>TC</variation>
    <location>
        <begin position="1334"/>
        <end position="1335"/>
    </location>
</feature>
<protein>
    <recommendedName>
        <fullName>Leptomycin B resistance protein pmd1</fullName>
    </recommendedName>
</protein>
<organism>
    <name type="scientific">Schizosaccharomyces pombe (strain 972 / ATCC 24843)</name>
    <name type="common">Fission yeast</name>
    <dbReference type="NCBI Taxonomy" id="284812"/>
    <lineage>
        <taxon>Eukaryota</taxon>
        <taxon>Fungi</taxon>
        <taxon>Dikarya</taxon>
        <taxon>Ascomycota</taxon>
        <taxon>Taphrinomycotina</taxon>
        <taxon>Schizosaccharomycetes</taxon>
        <taxon>Schizosaccharomycetales</taxon>
        <taxon>Schizosaccharomycetaceae</taxon>
        <taxon>Schizosaccharomyces</taxon>
    </lineage>
</organism>
<reference key="1">
    <citation type="journal article" date="1992" name="Mol. Microbiol.">
        <title>A leptomycin B resistance gene of Schizosaccharomyces pombe encodes a protein similar to the mammalian P-glycoproteins.</title>
        <authorList>
            <person name="Nishi K."/>
            <person name="Yoshida M."/>
            <person name="Nishimura M."/>
            <person name="Nishikawa M."/>
            <person name="Nishiyama M."/>
            <person name="Horinouchi S."/>
            <person name="Beppu T."/>
        </authorList>
    </citation>
    <scope>NUCLEOTIDE SEQUENCE [GENOMIC DNA]</scope>
</reference>
<reference key="2">
    <citation type="journal article" date="2002" name="Nature">
        <title>The genome sequence of Schizosaccharomyces pombe.</title>
        <authorList>
            <person name="Wood V."/>
            <person name="Gwilliam R."/>
            <person name="Rajandream M.A."/>
            <person name="Lyne M.H."/>
            <person name="Lyne R."/>
            <person name="Stewart A."/>
            <person name="Sgouros J.G."/>
            <person name="Peat N."/>
            <person name="Hayles J."/>
            <person name="Baker S.G."/>
            <person name="Basham D."/>
            <person name="Bowman S."/>
            <person name="Brooks K."/>
            <person name="Brown D."/>
            <person name="Brown S."/>
            <person name="Chillingworth T."/>
            <person name="Churcher C.M."/>
            <person name="Collins M."/>
            <person name="Connor R."/>
            <person name="Cronin A."/>
            <person name="Davis P."/>
            <person name="Feltwell T."/>
            <person name="Fraser A."/>
            <person name="Gentles S."/>
            <person name="Goble A."/>
            <person name="Hamlin N."/>
            <person name="Harris D.E."/>
            <person name="Hidalgo J."/>
            <person name="Hodgson G."/>
            <person name="Holroyd S."/>
            <person name="Hornsby T."/>
            <person name="Howarth S."/>
            <person name="Huckle E.J."/>
            <person name="Hunt S."/>
            <person name="Jagels K."/>
            <person name="James K.D."/>
            <person name="Jones L."/>
            <person name="Jones M."/>
            <person name="Leather S."/>
            <person name="McDonald S."/>
            <person name="McLean J."/>
            <person name="Mooney P."/>
            <person name="Moule S."/>
            <person name="Mungall K.L."/>
            <person name="Murphy L.D."/>
            <person name="Niblett D."/>
            <person name="Odell C."/>
            <person name="Oliver K."/>
            <person name="O'Neil S."/>
            <person name="Pearson D."/>
            <person name="Quail M.A."/>
            <person name="Rabbinowitsch E."/>
            <person name="Rutherford K.M."/>
            <person name="Rutter S."/>
            <person name="Saunders D."/>
            <person name="Seeger K."/>
            <person name="Sharp S."/>
            <person name="Skelton J."/>
            <person name="Simmonds M.N."/>
            <person name="Squares R."/>
            <person name="Squares S."/>
            <person name="Stevens K."/>
            <person name="Taylor K."/>
            <person name="Taylor R.G."/>
            <person name="Tivey A."/>
            <person name="Walsh S.V."/>
            <person name="Warren T."/>
            <person name="Whitehead S."/>
            <person name="Woodward J.R."/>
            <person name="Volckaert G."/>
            <person name="Aert R."/>
            <person name="Robben J."/>
            <person name="Grymonprez B."/>
            <person name="Weltjens I."/>
            <person name="Vanstreels E."/>
            <person name="Rieger M."/>
            <person name="Schaefer M."/>
            <person name="Mueller-Auer S."/>
            <person name="Gabel C."/>
            <person name="Fuchs M."/>
            <person name="Duesterhoeft A."/>
            <person name="Fritzc C."/>
            <person name="Holzer E."/>
            <person name="Moestl D."/>
            <person name="Hilbert H."/>
            <person name="Borzym K."/>
            <person name="Langer I."/>
            <person name="Beck A."/>
            <person name="Lehrach H."/>
            <person name="Reinhardt R."/>
            <person name="Pohl T.M."/>
            <person name="Eger P."/>
            <person name="Zimmermann W."/>
            <person name="Wedler H."/>
            <person name="Wambutt R."/>
            <person name="Purnelle B."/>
            <person name="Goffeau A."/>
            <person name="Cadieu E."/>
            <person name="Dreano S."/>
            <person name="Gloux S."/>
            <person name="Lelaure V."/>
            <person name="Mottier S."/>
            <person name="Galibert F."/>
            <person name="Aves S.J."/>
            <person name="Xiang Z."/>
            <person name="Hunt C."/>
            <person name="Moore K."/>
            <person name="Hurst S.M."/>
            <person name="Lucas M."/>
            <person name="Rochet M."/>
            <person name="Gaillardin C."/>
            <person name="Tallada V.A."/>
            <person name="Garzon A."/>
            <person name="Thode G."/>
            <person name="Daga R.R."/>
            <person name="Cruzado L."/>
            <person name="Jimenez J."/>
            <person name="Sanchez M."/>
            <person name="del Rey F."/>
            <person name="Benito J."/>
            <person name="Dominguez A."/>
            <person name="Revuelta J.L."/>
            <person name="Moreno S."/>
            <person name="Armstrong J."/>
            <person name="Forsburg S.L."/>
            <person name="Cerutti L."/>
            <person name="Lowe T."/>
            <person name="McCombie W.R."/>
            <person name="Paulsen I."/>
            <person name="Potashkin J."/>
            <person name="Shpakovski G.V."/>
            <person name="Ussery D."/>
            <person name="Barrell B.G."/>
            <person name="Nurse P."/>
        </authorList>
    </citation>
    <scope>NUCLEOTIDE SEQUENCE [LARGE SCALE GENOMIC DNA]</scope>
    <source>
        <strain>972 / ATCC 24843</strain>
    </source>
</reference>
<proteinExistence type="inferred from homology"/>